<organism>
    <name type="scientific">Yersinia pseudotuberculosis serotype IB (strain PB1/+)</name>
    <dbReference type="NCBI Taxonomy" id="502801"/>
    <lineage>
        <taxon>Bacteria</taxon>
        <taxon>Pseudomonadati</taxon>
        <taxon>Pseudomonadota</taxon>
        <taxon>Gammaproteobacteria</taxon>
        <taxon>Enterobacterales</taxon>
        <taxon>Yersiniaceae</taxon>
        <taxon>Yersinia</taxon>
    </lineage>
</organism>
<name>RL361_YERPB</name>
<evidence type="ECO:0000255" key="1">
    <source>
        <dbReference type="HAMAP-Rule" id="MF_00251"/>
    </source>
</evidence>
<evidence type="ECO:0000305" key="2"/>
<proteinExistence type="inferred from homology"/>
<comment type="similarity">
    <text evidence="1">Belongs to the bacterial ribosomal protein bL36 family.</text>
</comment>
<dbReference type="EMBL" id="CP001048">
    <property type="protein sequence ID" value="ACC88004.1"/>
    <property type="molecule type" value="Genomic_DNA"/>
</dbReference>
<dbReference type="SMR" id="B2K6Y0"/>
<dbReference type="KEGG" id="ypb:YPTS_1023"/>
<dbReference type="PATRIC" id="fig|502801.10.peg.366"/>
<dbReference type="GO" id="GO:1990904">
    <property type="term" value="C:ribonucleoprotein complex"/>
    <property type="evidence" value="ECO:0007669"/>
    <property type="project" value="UniProtKB-KW"/>
</dbReference>
<dbReference type="GO" id="GO:0005840">
    <property type="term" value="C:ribosome"/>
    <property type="evidence" value="ECO:0007669"/>
    <property type="project" value="UniProtKB-KW"/>
</dbReference>
<dbReference type="GO" id="GO:0003735">
    <property type="term" value="F:structural constituent of ribosome"/>
    <property type="evidence" value="ECO:0007669"/>
    <property type="project" value="InterPro"/>
</dbReference>
<dbReference type="GO" id="GO:0006412">
    <property type="term" value="P:translation"/>
    <property type="evidence" value="ECO:0007669"/>
    <property type="project" value="UniProtKB-UniRule"/>
</dbReference>
<dbReference type="HAMAP" id="MF_00251">
    <property type="entry name" value="Ribosomal_bL36"/>
    <property type="match status" value="1"/>
</dbReference>
<dbReference type="InterPro" id="IPR000473">
    <property type="entry name" value="Ribosomal_bL36"/>
</dbReference>
<dbReference type="InterPro" id="IPR035977">
    <property type="entry name" value="Ribosomal_bL36_sp"/>
</dbReference>
<dbReference type="InterPro" id="IPR047621">
    <property type="entry name" value="Ribosomal_L36_bact"/>
</dbReference>
<dbReference type="NCBIfam" id="NF002021">
    <property type="entry name" value="PRK00831.1"/>
    <property type="match status" value="1"/>
</dbReference>
<dbReference type="NCBIfam" id="TIGR01022">
    <property type="entry name" value="rpmJ_bact"/>
    <property type="match status" value="1"/>
</dbReference>
<dbReference type="PANTHER" id="PTHR47781">
    <property type="entry name" value="50S RIBOSOMAL PROTEIN L36 2"/>
    <property type="match status" value="1"/>
</dbReference>
<dbReference type="PANTHER" id="PTHR47781:SF1">
    <property type="entry name" value="LARGE RIBOSOMAL SUBUNIT PROTEIN BL36B"/>
    <property type="match status" value="1"/>
</dbReference>
<dbReference type="Pfam" id="PF00444">
    <property type="entry name" value="Ribosomal_L36"/>
    <property type="match status" value="1"/>
</dbReference>
<dbReference type="SUPFAM" id="SSF57840">
    <property type="entry name" value="Ribosomal protein L36"/>
    <property type="match status" value="1"/>
</dbReference>
<dbReference type="PROSITE" id="PS00828">
    <property type="entry name" value="RIBOSOMAL_L36"/>
    <property type="match status" value="1"/>
</dbReference>
<keyword id="KW-0687">Ribonucleoprotein</keyword>
<keyword id="KW-0689">Ribosomal protein</keyword>
<sequence>MQVLSSLRSAKNRHPDCKIVRRRGRVYVICKSNPRFKAVQGGTHKKR</sequence>
<reference key="1">
    <citation type="submission" date="2008-04" db="EMBL/GenBank/DDBJ databases">
        <title>Complete sequence of Yersinia pseudotuberculosis PB1/+.</title>
        <authorList>
            <person name="Copeland A."/>
            <person name="Lucas S."/>
            <person name="Lapidus A."/>
            <person name="Glavina del Rio T."/>
            <person name="Dalin E."/>
            <person name="Tice H."/>
            <person name="Bruce D."/>
            <person name="Goodwin L."/>
            <person name="Pitluck S."/>
            <person name="Munk A.C."/>
            <person name="Brettin T."/>
            <person name="Detter J.C."/>
            <person name="Han C."/>
            <person name="Tapia R."/>
            <person name="Schmutz J."/>
            <person name="Larimer F."/>
            <person name="Land M."/>
            <person name="Hauser L."/>
            <person name="Challacombe J.F."/>
            <person name="Green L."/>
            <person name="Lindler L.E."/>
            <person name="Nikolich M.P."/>
            <person name="Richardson P."/>
        </authorList>
    </citation>
    <scope>NUCLEOTIDE SEQUENCE [LARGE SCALE GENOMIC DNA]</scope>
    <source>
        <strain>PB1/+</strain>
    </source>
</reference>
<gene>
    <name evidence="1" type="primary">rpmJ1</name>
    <name type="ordered locus">YPTS_1023</name>
</gene>
<accession>B2K6Y0</accession>
<protein>
    <recommendedName>
        <fullName evidence="1">Large ribosomal subunit protein bL36A</fullName>
    </recommendedName>
    <alternativeName>
        <fullName evidence="2">50S ribosomal protein L36 1</fullName>
    </alternativeName>
</protein>
<feature type="chain" id="PRO_0000344735" description="Large ribosomal subunit protein bL36A">
    <location>
        <begin position="1"/>
        <end position="47"/>
    </location>
</feature>